<reference key="1">
    <citation type="journal article" date="1990" name="Virology">
        <title>The complete DNA sequence of vaccinia virus.</title>
        <authorList>
            <person name="Goebel S.J."/>
            <person name="Johnson G.P."/>
            <person name="Perkus M.E."/>
            <person name="Davis S.W."/>
            <person name="Winslow J.P."/>
            <person name="Paoletti E."/>
        </authorList>
    </citation>
    <scope>NUCLEOTIDE SEQUENCE [LARGE SCALE GENOMIC DNA]</scope>
</reference>
<reference key="2">
    <citation type="journal article" date="1990" name="Virology">
        <title>Appendix to 'The complete DNA sequence of vaccinia virus'.</title>
        <authorList>
            <person name="Goebel S.J."/>
            <person name="Johnson G.P."/>
            <person name="Perkus M.E."/>
            <person name="Davis S.W."/>
            <person name="Winslow J.P."/>
            <person name="Paoletti E."/>
        </authorList>
    </citation>
    <scope>COMPLETE GENOME</scope>
</reference>
<keyword id="KW-1035">Host cytoplasm</keyword>
<keyword id="KW-0426">Late protein</keyword>
<keyword id="KW-1185">Reference proteome</keyword>
<keyword id="KW-0946">Virion</keyword>
<sequence length="567" mass="66670">MDFIRRKYLIYTVENNIDFLKDDTLSKVNNFTLNHVLALKYLVSNFPQHVITKDVLANTNFFVFIHMVRCCKVYEAVLRHAFDAPTLYVKALTKNYLSFSNAIQSYKETVHKLTQDEKFLEVAEYMDELGELIGVNYDLVLNPLFHGGEPIKDMEIIFLKLFKKTDFKVVKKLSVIRLLIWAYLSKKDTGIEFADNDRQDIYTLFQQTGRIVHSNLTETFRDYIFPGDKTSYWVWLNESIANDADIVLNRHAITMYDKILSYIYSEIKQGRVNKNMLKLVYIFEPEKDIRELLLEIIYDIPGDILSIIDAKNDDWKKYFISFYKANFINGNTFISDRTFNEDLFRVVVQIDPEYFDNERIMSLFSTSAADIKRFDELDINNSYISNIIYEVNDITLDTMDDMKKCQIFNEDTSYYVKEYNTYLFLHESDPMVIENGILKKLSSIKSKSKRLNLFSKNILKYYLDGQLARLGLVLDDYKGDLLVKMINHLKSVEDVSAFVRFSTDKNPSILPSLIKTILASYNISIIVLFQRFLRDNLYHVEEFLDKSIHLTKTDKKYILQLIRHGRS</sequence>
<proteinExistence type="inferred from homology"/>
<accession>P21047</accession>
<dbReference type="EMBL" id="M35027">
    <property type="protein sequence ID" value="AAA48044.1"/>
    <property type="molecule type" value="Genomic_DNA"/>
</dbReference>
<dbReference type="PIR" id="A42509">
    <property type="entry name" value="A42509"/>
</dbReference>
<dbReference type="Proteomes" id="UP000008269">
    <property type="component" value="Segment"/>
</dbReference>
<dbReference type="GO" id="GO:0030430">
    <property type="term" value="C:host cell cytoplasm"/>
    <property type="evidence" value="ECO:0007669"/>
    <property type="project" value="UniProtKB-SubCell"/>
</dbReference>
<dbReference type="GO" id="GO:0044423">
    <property type="term" value="C:virion component"/>
    <property type="evidence" value="ECO:0007669"/>
    <property type="project" value="UniProtKB-KW"/>
</dbReference>
<dbReference type="InterPro" id="IPR006749">
    <property type="entry name" value="Pox_E6"/>
</dbReference>
<dbReference type="Pfam" id="PF04656">
    <property type="entry name" value="Pox_E6"/>
    <property type="match status" value="1"/>
</dbReference>
<dbReference type="PIRSF" id="PIRSF015629">
    <property type="entry name" value="VAC_E6R"/>
    <property type="match status" value="1"/>
</dbReference>
<feature type="chain" id="PRO_0000099454" description="Protein OPG068">
    <location>
        <begin position="1"/>
        <end position="567"/>
    </location>
</feature>
<evidence type="ECO:0000250" key="1">
    <source>
        <dbReference type="UniProtKB" id="P21607"/>
    </source>
</evidence>
<evidence type="ECO:0000305" key="2"/>
<organism>
    <name type="scientific">Vaccinia virus (strain Copenhagen)</name>
    <name type="common">VACV</name>
    <dbReference type="NCBI Taxonomy" id="10249"/>
    <lineage>
        <taxon>Viruses</taxon>
        <taxon>Varidnaviria</taxon>
        <taxon>Bamfordvirae</taxon>
        <taxon>Nucleocytoviricota</taxon>
        <taxon>Pokkesviricetes</taxon>
        <taxon>Chitovirales</taxon>
        <taxon>Poxviridae</taxon>
        <taxon>Chordopoxvirinae</taxon>
        <taxon>Orthopoxvirus</taxon>
        <taxon>Vaccinia virus</taxon>
    </lineage>
</organism>
<organismHost>
    <name type="scientific">Homo sapiens</name>
    <name type="common">Human</name>
    <dbReference type="NCBI Taxonomy" id="9606"/>
</organismHost>
<gene>
    <name type="primary">OPG068</name>
    <name type="synonym">E6R</name>
</gene>
<name>PG068_VACCC</name>
<comment type="function">
    <text evidence="1">Plays an essential role for maintaining proper localization of the seven-protein complex and the viroplasm during assembly.</text>
</comment>
<comment type="subcellular location">
    <subcellularLocation>
        <location evidence="1">Virion</location>
    </subcellularLocation>
    <subcellularLocation>
        <location evidence="1">Host cytoplasm</location>
    </subcellularLocation>
    <text evidence="1">Localizes in viroplasm and in the mature virion (MV).</text>
</comment>
<comment type="induction">
    <text evidence="1">Expressed in the intermediate phase of the viral replicative cycle.</text>
</comment>
<comment type="similarity">
    <text evidence="2">Belongs to the orthopoxvirus OPG068 family.</text>
</comment>
<protein>
    <recommendedName>
        <fullName>Protein OPG068</fullName>
    </recommendedName>
    <alternativeName>
        <fullName>Protein E6</fullName>
    </alternativeName>
</protein>